<accession>B7FRU7</accession>
<protein>
    <recommendedName>
        <fullName>Lipoyl synthase 1, mitochondrial</fullName>
        <ecNumber evidence="1">2.8.1.8</ecNumber>
    </recommendedName>
    <alternativeName>
        <fullName evidence="1">Lipoate synthase 1</fullName>
        <shortName evidence="1">LS 1</shortName>
        <shortName evidence="1">Lip-syn 1</shortName>
    </alternativeName>
    <alternativeName>
        <fullName evidence="1">Lipoic acid synthase 1</fullName>
    </alternativeName>
</protein>
<proteinExistence type="inferred from homology"/>
<keyword id="KW-0004">4Fe-4S</keyword>
<keyword id="KW-0408">Iron</keyword>
<keyword id="KW-0411">Iron-sulfur</keyword>
<keyword id="KW-0479">Metal-binding</keyword>
<keyword id="KW-0496">Mitochondrion</keyword>
<keyword id="KW-1185">Reference proteome</keyword>
<keyword id="KW-0949">S-adenosyl-L-methionine</keyword>
<keyword id="KW-0808">Transferase</keyword>
<keyword id="KW-0809">Transit peptide</keyword>
<sequence>MWSSSSSLCRNPSFRRAWLSTVTVTQTAAPTSSRLAALRTQLATEEASIDDFSSTNAPTTTTHYTSSNGSPIVRQKAAPRSAKILPKPRWLKAAPATSDNYRKLRDTVRELGLATVCEEARCPNIGECWGGGEDQTATATIMIMGDTCTRGCRFCSVKTSRAPPPLDPHEPEKVATAIAQWGLDYVVLTSVDRDDLPDQGADHFRQVVTQLKLKKPSLLVEALTPDFQGNMDLVHAVATSGLDVYAHNMETVEALTPKVRDRRATYRQSLEVLRYVKTIQSDPIGTTNNHNNNNGCLTKTSLMLGLGETDDQVLTTLRDLRDADVDVVTFGQYLQPTKKHLPVQEYVTPEKFDFWQETAMGMGFAYVASGPLVRSSYKAGELFLQKYIAQKKQRNAEVAAA</sequence>
<organism>
    <name type="scientific">Phaeodactylum tricornutum (strain CCAP 1055/1)</name>
    <dbReference type="NCBI Taxonomy" id="556484"/>
    <lineage>
        <taxon>Eukaryota</taxon>
        <taxon>Sar</taxon>
        <taxon>Stramenopiles</taxon>
        <taxon>Ochrophyta</taxon>
        <taxon>Bacillariophyta</taxon>
        <taxon>Bacillariophyceae</taxon>
        <taxon>Bacillariophycidae</taxon>
        <taxon>Naviculales</taxon>
        <taxon>Phaeodactylaceae</taxon>
        <taxon>Phaeodactylum</taxon>
    </lineage>
</organism>
<dbReference type="EC" id="2.8.1.8" evidence="1"/>
<dbReference type="EMBL" id="CM000606">
    <property type="protein sequence ID" value="EEC50372.1"/>
    <property type="molecule type" value="Genomic_DNA"/>
</dbReference>
<dbReference type="RefSeq" id="XP_002177558.1">
    <property type="nucleotide sequence ID" value="XM_002177522.1"/>
</dbReference>
<dbReference type="SMR" id="B7FRU7"/>
<dbReference type="STRING" id="556484.B7FRU7"/>
<dbReference type="PaxDb" id="2850-Phatr18029"/>
<dbReference type="EnsemblProtists" id="Phatr3_J18029.t1">
    <property type="protein sequence ID" value="Phatr3_J18029.p1"/>
    <property type="gene ID" value="Phatr3_J18029"/>
</dbReference>
<dbReference type="GeneID" id="7197080"/>
<dbReference type="KEGG" id="pti:PHATRDRAFT_18029"/>
<dbReference type="eggNOG" id="KOG2672">
    <property type="taxonomic scope" value="Eukaryota"/>
</dbReference>
<dbReference type="HOGENOM" id="CLU_033144_2_0_1"/>
<dbReference type="InParanoid" id="B7FRU7"/>
<dbReference type="OMA" id="PYCDIDF"/>
<dbReference type="OrthoDB" id="3231at2759"/>
<dbReference type="UniPathway" id="UPA00538">
    <property type="reaction ID" value="UER00593"/>
</dbReference>
<dbReference type="Proteomes" id="UP000000759">
    <property type="component" value="Chromosome 2"/>
</dbReference>
<dbReference type="GO" id="GO:0005739">
    <property type="term" value="C:mitochondrion"/>
    <property type="evidence" value="ECO:0007669"/>
    <property type="project" value="UniProtKB-SubCell"/>
</dbReference>
<dbReference type="GO" id="GO:0051539">
    <property type="term" value="F:4 iron, 4 sulfur cluster binding"/>
    <property type="evidence" value="ECO:0007669"/>
    <property type="project" value="UniProtKB-UniRule"/>
</dbReference>
<dbReference type="GO" id="GO:0016992">
    <property type="term" value="F:lipoate synthase activity"/>
    <property type="evidence" value="ECO:0007669"/>
    <property type="project" value="UniProtKB-UniRule"/>
</dbReference>
<dbReference type="GO" id="GO:0046872">
    <property type="term" value="F:metal ion binding"/>
    <property type="evidence" value="ECO:0007669"/>
    <property type="project" value="UniProtKB-KW"/>
</dbReference>
<dbReference type="CDD" id="cd01335">
    <property type="entry name" value="Radical_SAM"/>
    <property type="match status" value="1"/>
</dbReference>
<dbReference type="Gene3D" id="3.20.20.70">
    <property type="entry name" value="Aldolase class I"/>
    <property type="match status" value="1"/>
</dbReference>
<dbReference type="HAMAP" id="MF_00206">
    <property type="entry name" value="Lipoyl_synth"/>
    <property type="match status" value="1"/>
</dbReference>
<dbReference type="InterPro" id="IPR013785">
    <property type="entry name" value="Aldolase_TIM"/>
</dbReference>
<dbReference type="InterPro" id="IPR006638">
    <property type="entry name" value="Elp3/MiaA/NifB-like_rSAM"/>
</dbReference>
<dbReference type="InterPro" id="IPR031691">
    <property type="entry name" value="LIAS_N"/>
</dbReference>
<dbReference type="InterPro" id="IPR003698">
    <property type="entry name" value="Lipoyl_synth"/>
</dbReference>
<dbReference type="InterPro" id="IPR007197">
    <property type="entry name" value="rSAM"/>
</dbReference>
<dbReference type="NCBIfam" id="TIGR00510">
    <property type="entry name" value="lipA"/>
    <property type="match status" value="1"/>
</dbReference>
<dbReference type="NCBIfam" id="NF004019">
    <property type="entry name" value="PRK05481.1"/>
    <property type="match status" value="1"/>
</dbReference>
<dbReference type="NCBIfam" id="NF009544">
    <property type="entry name" value="PRK12928.1"/>
    <property type="match status" value="1"/>
</dbReference>
<dbReference type="PANTHER" id="PTHR10949">
    <property type="entry name" value="LIPOYL SYNTHASE"/>
    <property type="match status" value="1"/>
</dbReference>
<dbReference type="PANTHER" id="PTHR10949:SF0">
    <property type="entry name" value="LIPOYL SYNTHASE, MITOCHONDRIAL"/>
    <property type="match status" value="1"/>
</dbReference>
<dbReference type="Pfam" id="PF16881">
    <property type="entry name" value="LIAS_N"/>
    <property type="match status" value="1"/>
</dbReference>
<dbReference type="Pfam" id="PF04055">
    <property type="entry name" value="Radical_SAM"/>
    <property type="match status" value="1"/>
</dbReference>
<dbReference type="PIRSF" id="PIRSF005963">
    <property type="entry name" value="Lipoyl_synth"/>
    <property type="match status" value="1"/>
</dbReference>
<dbReference type="SFLD" id="SFLDF00271">
    <property type="entry name" value="lipoyl_synthase"/>
    <property type="match status" value="1"/>
</dbReference>
<dbReference type="SFLD" id="SFLDG01058">
    <property type="entry name" value="lipoyl_synthase_like"/>
    <property type="match status" value="1"/>
</dbReference>
<dbReference type="SMART" id="SM00729">
    <property type="entry name" value="Elp3"/>
    <property type="match status" value="1"/>
</dbReference>
<dbReference type="SUPFAM" id="SSF102114">
    <property type="entry name" value="Radical SAM enzymes"/>
    <property type="match status" value="1"/>
</dbReference>
<dbReference type="PROSITE" id="PS51918">
    <property type="entry name" value="RADICAL_SAM"/>
    <property type="match status" value="1"/>
</dbReference>
<gene>
    <name type="ORF">PHATRDRAFT_18029</name>
</gene>
<name>LIPA1_PHATC</name>
<feature type="transit peptide" description="Mitochondrion" evidence="1">
    <location>
        <begin position="1"/>
        <end position="25"/>
    </location>
</feature>
<feature type="chain" id="PRO_0000398243" description="Lipoyl synthase 1, mitochondrial">
    <location>
        <begin position="26"/>
        <end position="401"/>
    </location>
</feature>
<feature type="domain" description="Radical SAM core" evidence="2">
    <location>
        <begin position="133"/>
        <end position="365"/>
    </location>
</feature>
<feature type="region of interest" description="Disordered" evidence="3">
    <location>
        <begin position="49"/>
        <end position="79"/>
    </location>
</feature>
<feature type="compositionally biased region" description="Polar residues" evidence="3">
    <location>
        <begin position="51"/>
        <end position="70"/>
    </location>
</feature>
<feature type="binding site" evidence="1">
    <location>
        <position position="117"/>
    </location>
    <ligand>
        <name>[4Fe-4S] cluster</name>
        <dbReference type="ChEBI" id="CHEBI:49883"/>
        <label>1</label>
    </ligand>
</feature>
<feature type="binding site" evidence="1">
    <location>
        <position position="122"/>
    </location>
    <ligand>
        <name>[4Fe-4S] cluster</name>
        <dbReference type="ChEBI" id="CHEBI:49883"/>
        <label>1</label>
    </ligand>
</feature>
<feature type="binding site" evidence="1">
    <location>
        <position position="128"/>
    </location>
    <ligand>
        <name>[4Fe-4S] cluster</name>
        <dbReference type="ChEBI" id="CHEBI:49883"/>
        <label>1</label>
    </ligand>
</feature>
<feature type="binding site" evidence="1">
    <location>
        <position position="148"/>
    </location>
    <ligand>
        <name>[4Fe-4S] cluster</name>
        <dbReference type="ChEBI" id="CHEBI:49883"/>
        <label>2</label>
        <note>4Fe-4S-S-AdoMet</note>
    </ligand>
</feature>
<feature type="binding site" evidence="1">
    <location>
        <position position="152"/>
    </location>
    <ligand>
        <name>[4Fe-4S] cluster</name>
        <dbReference type="ChEBI" id="CHEBI:49883"/>
        <label>2</label>
        <note>4Fe-4S-S-AdoMet</note>
    </ligand>
</feature>
<feature type="binding site" evidence="1">
    <location>
        <position position="155"/>
    </location>
    <ligand>
        <name>[4Fe-4S] cluster</name>
        <dbReference type="ChEBI" id="CHEBI:49883"/>
        <label>2</label>
        <note>4Fe-4S-S-AdoMet</note>
    </ligand>
</feature>
<feature type="binding site" evidence="1">
    <location>
        <position position="376"/>
    </location>
    <ligand>
        <name>[4Fe-4S] cluster</name>
        <dbReference type="ChEBI" id="CHEBI:49883"/>
        <label>1</label>
    </ligand>
</feature>
<evidence type="ECO:0000255" key="1">
    <source>
        <dbReference type="HAMAP-Rule" id="MF_03123"/>
    </source>
</evidence>
<evidence type="ECO:0000255" key="2">
    <source>
        <dbReference type="PROSITE-ProRule" id="PRU01266"/>
    </source>
</evidence>
<evidence type="ECO:0000256" key="3">
    <source>
        <dbReference type="SAM" id="MobiDB-lite"/>
    </source>
</evidence>
<reference key="1">
    <citation type="journal article" date="2008" name="Nature">
        <title>The Phaeodactylum genome reveals the evolutionary history of diatom genomes.</title>
        <authorList>
            <person name="Bowler C."/>
            <person name="Allen A.E."/>
            <person name="Badger J.H."/>
            <person name="Grimwood J."/>
            <person name="Jabbari K."/>
            <person name="Kuo A."/>
            <person name="Maheswari U."/>
            <person name="Martens C."/>
            <person name="Maumus F."/>
            <person name="Otillar R.P."/>
            <person name="Rayko E."/>
            <person name="Salamov A."/>
            <person name="Vandepoele K."/>
            <person name="Beszteri B."/>
            <person name="Gruber A."/>
            <person name="Heijde M."/>
            <person name="Katinka M."/>
            <person name="Mock T."/>
            <person name="Valentin K."/>
            <person name="Verret F."/>
            <person name="Berges J.A."/>
            <person name="Brownlee C."/>
            <person name="Cadoret J.P."/>
            <person name="Chiovitti A."/>
            <person name="Choi C.J."/>
            <person name="Coesel S."/>
            <person name="De Martino A."/>
            <person name="Detter J.C."/>
            <person name="Durkin C."/>
            <person name="Falciatore A."/>
            <person name="Fournet J."/>
            <person name="Haruta M."/>
            <person name="Huysman M.J."/>
            <person name="Jenkins B.D."/>
            <person name="Jiroutova K."/>
            <person name="Jorgensen R.E."/>
            <person name="Joubert Y."/>
            <person name="Kaplan A."/>
            <person name="Kroger N."/>
            <person name="Kroth P.G."/>
            <person name="La Roche J."/>
            <person name="Lindquist E."/>
            <person name="Lommer M."/>
            <person name="Martin-Jezequel V."/>
            <person name="Lopez P.J."/>
            <person name="Lucas S."/>
            <person name="Mangogna M."/>
            <person name="McGinnis K."/>
            <person name="Medlin L.K."/>
            <person name="Montsant A."/>
            <person name="Oudot-Le Secq M.P."/>
            <person name="Napoli C."/>
            <person name="Obornik M."/>
            <person name="Parker M.S."/>
            <person name="Petit J.L."/>
            <person name="Porcel B.M."/>
            <person name="Poulsen N."/>
            <person name="Robison M."/>
            <person name="Rychlewski L."/>
            <person name="Rynearson T.A."/>
            <person name="Schmutz J."/>
            <person name="Shapiro H."/>
            <person name="Siaut M."/>
            <person name="Stanley M."/>
            <person name="Sussman M.R."/>
            <person name="Taylor A.R."/>
            <person name="Vardi A."/>
            <person name="von Dassow P."/>
            <person name="Vyverman W."/>
            <person name="Willis A."/>
            <person name="Wyrwicz L.S."/>
            <person name="Rokhsar D.S."/>
            <person name="Weissenbach J."/>
            <person name="Armbrust E.V."/>
            <person name="Green B.R."/>
            <person name="Van de Peer Y."/>
            <person name="Grigoriev I.V."/>
        </authorList>
    </citation>
    <scope>NUCLEOTIDE SEQUENCE [LARGE SCALE GENOMIC DNA]</scope>
    <source>
        <strain>CCAP 1055/1</strain>
    </source>
</reference>
<reference key="2">
    <citation type="submission" date="2008-08" db="EMBL/GenBank/DDBJ databases">
        <authorList>
            <consortium name="Diatom Consortium"/>
            <person name="Grigoriev I."/>
            <person name="Grimwood J."/>
            <person name="Kuo A."/>
            <person name="Otillar R.P."/>
            <person name="Salamov A."/>
            <person name="Detter J.C."/>
            <person name="Lindquist E."/>
            <person name="Shapiro H."/>
            <person name="Lucas S."/>
            <person name="Glavina del Rio T."/>
            <person name="Pitluck S."/>
            <person name="Rokhsar D."/>
            <person name="Bowler C."/>
        </authorList>
    </citation>
    <scope>GENOME REANNOTATION</scope>
    <source>
        <strain>CCAP 1055/1</strain>
    </source>
</reference>
<comment type="function">
    <text evidence="1">Catalyzes the radical-mediated insertion of two sulfur atoms into the C-6 and C-8 positions of the octanoyl moiety bound to the lipoyl domains of lipoate-dependent enzymes, thereby converting the octanoylated domains into lipoylated derivatives.</text>
</comment>
<comment type="catalytic activity">
    <reaction evidence="1">
        <text>[[Fe-S] cluster scaffold protein carrying a second [4Fe-4S](2+) cluster] + N(6)-octanoyl-L-lysyl-[protein] + 2 oxidized [2Fe-2S]-[ferredoxin] + 2 S-adenosyl-L-methionine + 4 H(+) = [[Fe-S] cluster scaffold protein] + N(6)-[(R)-dihydrolipoyl]-L-lysyl-[protein] + 4 Fe(3+) + 2 hydrogen sulfide + 2 5'-deoxyadenosine + 2 L-methionine + 2 reduced [2Fe-2S]-[ferredoxin]</text>
        <dbReference type="Rhea" id="RHEA:16585"/>
        <dbReference type="Rhea" id="RHEA-COMP:9928"/>
        <dbReference type="Rhea" id="RHEA-COMP:10000"/>
        <dbReference type="Rhea" id="RHEA-COMP:10001"/>
        <dbReference type="Rhea" id="RHEA-COMP:10475"/>
        <dbReference type="Rhea" id="RHEA-COMP:14568"/>
        <dbReference type="Rhea" id="RHEA-COMP:14569"/>
        <dbReference type="ChEBI" id="CHEBI:15378"/>
        <dbReference type="ChEBI" id="CHEBI:17319"/>
        <dbReference type="ChEBI" id="CHEBI:29034"/>
        <dbReference type="ChEBI" id="CHEBI:29919"/>
        <dbReference type="ChEBI" id="CHEBI:33722"/>
        <dbReference type="ChEBI" id="CHEBI:33737"/>
        <dbReference type="ChEBI" id="CHEBI:33738"/>
        <dbReference type="ChEBI" id="CHEBI:57844"/>
        <dbReference type="ChEBI" id="CHEBI:59789"/>
        <dbReference type="ChEBI" id="CHEBI:78809"/>
        <dbReference type="ChEBI" id="CHEBI:83100"/>
        <dbReference type="EC" id="2.8.1.8"/>
    </reaction>
</comment>
<comment type="cofactor">
    <cofactor evidence="1">
        <name>[4Fe-4S] cluster</name>
        <dbReference type="ChEBI" id="CHEBI:49883"/>
    </cofactor>
    <text evidence="1">Binds 2 [4Fe-4S] clusters per subunit. One cluster is coordinated with 3 cysteines and an exchangeable S-adenosyl-L-methionine.</text>
</comment>
<comment type="pathway">
    <text evidence="1">Protein modification; protein lipoylation via endogenous pathway; protein N(6)-(lipoyl)lysine from octanoyl-[acyl-carrier-protein]: step 2/2.</text>
</comment>
<comment type="subcellular location">
    <subcellularLocation>
        <location evidence="1">Mitochondrion</location>
    </subcellularLocation>
</comment>
<comment type="similarity">
    <text evidence="1">Belongs to the radical SAM superfamily. Lipoyl synthase family.</text>
</comment>